<gene>
    <name type="primary">ftsW</name>
</gene>
<keyword id="KW-0131">Cell cycle</keyword>
<keyword id="KW-0132">Cell division</keyword>
<keyword id="KW-1003">Cell membrane</keyword>
<keyword id="KW-0133">Cell shape</keyword>
<keyword id="KW-0961">Cell wall biogenesis/degradation</keyword>
<keyword id="KW-0328">Glycosyltransferase</keyword>
<keyword id="KW-0472">Membrane</keyword>
<keyword id="KW-0573">Peptidoglycan synthesis</keyword>
<keyword id="KW-0808">Transferase</keyword>
<keyword id="KW-0812">Transmembrane</keyword>
<keyword id="KW-1133">Transmembrane helix</keyword>
<name>FTSW_LACLC</name>
<evidence type="ECO:0000250" key="1"/>
<evidence type="ECO:0000250" key="2">
    <source>
        <dbReference type="UniProtKB" id="O07639"/>
    </source>
</evidence>
<evidence type="ECO:0000250" key="3">
    <source>
        <dbReference type="UniProtKB" id="P39604"/>
    </source>
</evidence>
<evidence type="ECO:0000255" key="4"/>
<evidence type="ECO:0000305" key="5"/>
<protein>
    <recommendedName>
        <fullName evidence="3">Probable peptidoglycan glycosyltransferase FtsW</fullName>
        <shortName evidence="3">PGT</shortName>
        <ecNumber evidence="3">2.4.99.28</ecNumber>
    </recommendedName>
    <alternativeName>
        <fullName evidence="2">Cell division protein FtsW</fullName>
    </alternativeName>
    <alternativeName>
        <fullName evidence="3">Cell wall polymerase</fullName>
    </alternativeName>
    <alternativeName>
        <fullName evidence="3">Peptidoglycan polymerase</fullName>
        <shortName evidence="3">PG polymerase</shortName>
    </alternativeName>
</protein>
<organism>
    <name type="scientific">Lactococcus lactis subsp. cremoris</name>
    <name type="common">Streptococcus cremoris</name>
    <dbReference type="NCBI Taxonomy" id="1359"/>
    <lineage>
        <taxon>Bacteria</taxon>
        <taxon>Bacillati</taxon>
        <taxon>Bacillota</taxon>
        <taxon>Bacilli</taxon>
        <taxon>Lactobacillales</taxon>
        <taxon>Streptococcaceae</taxon>
        <taxon>Lactococcus</taxon>
    </lineage>
</organism>
<accession>P27174</accession>
<sequence>MNLNKNNFLNYSILIPYLILAGIGIVMIFSTTVPDQLQKGLNPYKLVINQTAFVLLSIIMIAVIYRLKLRALKNRKMIGIIMVILILSLIFCRIMPSSFALTAPVNGARGWIHIPGIGTVQPAEFAKVFIIWYLASVFSTKQEEIEKNDINEIFKGKTLTQKLFGGWRLPVVAILLVDLIMPDLGNTMIIGAVALIMI</sequence>
<proteinExistence type="inferred from homology"/>
<reference key="1">
    <citation type="journal article" date="1992" name="Gene">
        <title>Sequence encoding ribosomal protein L33 of Lactococcus lactis.</title>
        <authorList>
            <person name="Koivula T."/>
            <person name="Hemilae H."/>
        </authorList>
    </citation>
    <scope>NUCLEOTIDE SEQUENCE [GENOMIC DNA]</scope>
    <source>
        <strain>MG1614</strain>
    </source>
</reference>
<feature type="chain" id="PRO_0000062708" description="Probable peptidoglycan glycosyltransferase FtsW">
    <location>
        <begin position="1"/>
        <end position="198" status="greater than"/>
    </location>
</feature>
<feature type="transmembrane region" description="Helical" evidence="4">
    <location>
        <begin position="13"/>
        <end position="33"/>
    </location>
</feature>
<feature type="transmembrane region" description="Helical" evidence="4">
    <location>
        <begin position="44"/>
        <end position="64"/>
    </location>
</feature>
<feature type="transmembrane region" description="Helical" evidence="4">
    <location>
        <begin position="77"/>
        <end position="97"/>
    </location>
</feature>
<feature type="transmembrane region" description="Helical" evidence="4">
    <location>
        <begin position="171"/>
        <end position="191"/>
    </location>
</feature>
<feature type="non-terminal residue">
    <location>
        <position position="198"/>
    </location>
</feature>
<comment type="function">
    <text evidence="3">Peptidoglycan polymerase that is essential for cell division.</text>
</comment>
<comment type="catalytic activity">
    <reaction evidence="3">
        <text>[GlcNAc-(1-&gt;4)-Mur2Ac(oyl-L-Ala-gamma-D-Glu-L-Lys-D-Ala-D-Ala)](n)-di-trans,octa-cis-undecaprenyl diphosphate + beta-D-GlcNAc-(1-&gt;4)-Mur2Ac(oyl-L-Ala-gamma-D-Glu-L-Lys-D-Ala-D-Ala)-di-trans,octa-cis-undecaprenyl diphosphate = [GlcNAc-(1-&gt;4)-Mur2Ac(oyl-L-Ala-gamma-D-Glu-L-Lys-D-Ala-D-Ala)](n+1)-di-trans,octa-cis-undecaprenyl diphosphate + di-trans,octa-cis-undecaprenyl diphosphate + H(+)</text>
        <dbReference type="Rhea" id="RHEA:23708"/>
        <dbReference type="Rhea" id="RHEA-COMP:9602"/>
        <dbReference type="Rhea" id="RHEA-COMP:9603"/>
        <dbReference type="ChEBI" id="CHEBI:15378"/>
        <dbReference type="ChEBI" id="CHEBI:58405"/>
        <dbReference type="ChEBI" id="CHEBI:60033"/>
        <dbReference type="ChEBI" id="CHEBI:78435"/>
        <dbReference type="EC" id="2.4.99.28"/>
    </reaction>
</comment>
<comment type="pathway">
    <text evidence="3">Cell wall biogenesis; peptidoglycan biosynthesis.</text>
</comment>
<comment type="subcellular location">
    <subcellularLocation>
        <location evidence="1">Cell membrane</location>
        <topology evidence="4">Multi-pass membrane protein</topology>
    </subcellularLocation>
    <text evidence="1">Localizes to the division septum.</text>
</comment>
<comment type="similarity">
    <text evidence="5">Belongs to the SEDS family. FtsW subfamily.</text>
</comment>
<dbReference type="EC" id="2.4.99.28" evidence="3"/>
<dbReference type="EMBL" id="X62621">
    <property type="protein sequence ID" value="CAA44490.1"/>
    <property type="molecule type" value="Genomic_DNA"/>
</dbReference>
<dbReference type="PIR" id="PC1134">
    <property type="entry name" value="PC1134"/>
</dbReference>
<dbReference type="SMR" id="P27174"/>
<dbReference type="UniPathway" id="UPA00219"/>
<dbReference type="GO" id="GO:0032153">
    <property type="term" value="C:cell division site"/>
    <property type="evidence" value="ECO:0007669"/>
    <property type="project" value="TreeGrafter"/>
</dbReference>
<dbReference type="GO" id="GO:0005886">
    <property type="term" value="C:plasma membrane"/>
    <property type="evidence" value="ECO:0007669"/>
    <property type="project" value="UniProtKB-SubCell"/>
</dbReference>
<dbReference type="GO" id="GO:0015648">
    <property type="term" value="F:lipid-linked peptidoglycan transporter activity"/>
    <property type="evidence" value="ECO:0007669"/>
    <property type="project" value="TreeGrafter"/>
</dbReference>
<dbReference type="GO" id="GO:0008955">
    <property type="term" value="F:peptidoglycan glycosyltransferase activity"/>
    <property type="evidence" value="ECO:0007669"/>
    <property type="project" value="RHEA"/>
</dbReference>
<dbReference type="GO" id="GO:0051301">
    <property type="term" value="P:cell division"/>
    <property type="evidence" value="ECO:0007669"/>
    <property type="project" value="UniProtKB-KW"/>
</dbReference>
<dbReference type="GO" id="GO:0071555">
    <property type="term" value="P:cell wall organization"/>
    <property type="evidence" value="ECO:0007669"/>
    <property type="project" value="UniProtKB-KW"/>
</dbReference>
<dbReference type="GO" id="GO:0009252">
    <property type="term" value="P:peptidoglycan biosynthetic process"/>
    <property type="evidence" value="ECO:0007669"/>
    <property type="project" value="UniProtKB-UniPathway"/>
</dbReference>
<dbReference type="GO" id="GO:0008360">
    <property type="term" value="P:regulation of cell shape"/>
    <property type="evidence" value="ECO:0007669"/>
    <property type="project" value="UniProtKB-KW"/>
</dbReference>
<dbReference type="InterPro" id="IPR001182">
    <property type="entry name" value="FtsW/RodA"/>
</dbReference>
<dbReference type="PANTHER" id="PTHR30474">
    <property type="entry name" value="CELL CYCLE PROTEIN"/>
    <property type="match status" value="1"/>
</dbReference>
<dbReference type="PANTHER" id="PTHR30474:SF2">
    <property type="entry name" value="PEPTIDOGLYCAN GLYCOSYLTRANSFERASE FTSW-RELATED"/>
    <property type="match status" value="1"/>
</dbReference>
<dbReference type="Pfam" id="PF01098">
    <property type="entry name" value="FTSW_RODA_SPOVE"/>
    <property type="match status" value="1"/>
</dbReference>